<accession>P0CT21</accession>
<accession>G8GV67</accession>
<accession>Q5G5T7</accession>
<name>EASG_CLAPU</name>
<protein>
    <recommendedName>
        <fullName evidence="14">Agroclavine dehydrogenase</fullName>
        <ecNumber evidence="11">1.5.1.46</ecNumber>
    </recommendedName>
    <alternativeName>
        <fullName evidence="14">Ergot alkaloid biosynthesis protein G</fullName>
    </alternativeName>
</protein>
<feature type="chain" id="PRO_0000422558" description="Agroclavine dehydrogenase">
    <location>
        <begin position="1"/>
        <end position="290"/>
    </location>
</feature>
<sequence length="290" mass="31890">MTVLLTGGTGRTAKHIAGIFRQTNVPFLVASRSSSAGTAENHRKFDWLDEETFPNALSVDQGMKPISVVWLCPPPLYDLATPVIKFIDFAVSQNVKKFVLLSASVIQKGGPAMGKIHGHLDSIKDVTYTVLRPTWFMENFSTKGEIQCEAIRRDSTVYSATENGKIPFISVVDIARVAACALTAETLKNSDHILQGPDLLTYDEVAQALTGVLGRKITHTKMTEGELAEKLMEEGVTPEEAYMHAAMDSMIKSGSEERVVSDEVKEWTGVKPRGFINFALSEKAAWRARK</sequence>
<reference key="1">
    <citation type="submission" date="2004-11" db="EMBL/GenBank/DDBJ databases">
        <title>Studies of ergot alkaloid biosynthesis genes in Clavicipitaceous fungi.</title>
        <authorList>
            <person name="Machado C."/>
            <person name="Schardl C.L."/>
        </authorList>
    </citation>
    <scope>NUCLEOTIDE SEQUENCE [GENOMIC DNA]</scope>
    <source>
        <strain>ATCC 20102 / Farmitalia FI 32/17</strain>
    </source>
</reference>
<reference key="2">
    <citation type="journal article" date="2001" name="Appl. Microbiol. Biotechnol.">
        <title>Biotechnology and genetics of ergot alkaloids.</title>
        <authorList>
            <person name="Tudzynski P."/>
            <person name="Correia T."/>
            <person name="Keller U."/>
        </authorList>
    </citation>
    <scope>BIOTECHNOLOGY</scope>
    <source>
        <strain>P1 / 1029/N5</strain>
    </source>
</reference>
<reference key="3">
    <citation type="journal article" date="2003" name="Chem. Biol.">
        <title>Molecular cloning and analysis of the ergopeptine assembly system in the ergot fungus Claviceps purpurea.</title>
        <authorList>
            <person name="Correia T."/>
            <person name="Grammel N."/>
            <person name="Ortel I."/>
            <person name="Keller U."/>
            <person name="Tudzynski P."/>
        </authorList>
    </citation>
    <scope>FUNCTION</scope>
</reference>
<reference key="4">
    <citation type="journal article" date="2004" name="Fungal Genet. Biol.">
        <title>The determinant step in ergot alkaloid biosynthesis by an endophyte of perennial ryegrass.</title>
        <authorList>
            <person name="Wang J."/>
            <person name="Machado C."/>
            <person name="Panaccione D.G."/>
            <person name="Tsai H.-F."/>
            <person name="Schardl C.L."/>
        </authorList>
    </citation>
    <scope>FUNCTION</scope>
    <source>
        <strain>ATCC 20102 / Farmitalia FI 32/17</strain>
    </source>
</reference>
<reference key="5">
    <citation type="journal article" date="2005" name="Phytochemistry">
        <title>The ergot alkaloid gene cluster in Claviceps purpurea: extension of the cluster sequence and intra species evolution.</title>
        <authorList>
            <person name="Haarmann T."/>
            <person name="Machado C."/>
            <person name="Lubbe Y."/>
            <person name="Correia T."/>
            <person name="Schardl C.L."/>
            <person name="Panaccione D.G."/>
            <person name="Tudzynski P."/>
        </authorList>
    </citation>
    <scope>FUNCTION</scope>
    <scope>IDENTIFICATION IN THE EAS CLUSTER</scope>
</reference>
<reference key="6">
    <citation type="journal article" date="2006" name="ChemBioChem">
        <title>Identification of the cytochrome P450 monooxygenase that bridges the clavine and ergoline alkaloid pathways.</title>
        <authorList>
            <person name="Haarmann T."/>
            <person name="Ortel I."/>
            <person name="Tudzynski P."/>
            <person name="Keller U."/>
        </authorList>
    </citation>
    <scope>FUNCTION</scope>
    <source>
        <strain>P1 / 1029/N5</strain>
    </source>
</reference>
<reference key="7">
    <citation type="journal article" date="2007" name="Appl. Environ. Microbiol.">
        <title>A complex ergovaline gene cluster in epichloe endophytes of grasses.</title>
        <authorList>
            <person name="Fleetwood D.J."/>
            <person name="Scott B."/>
            <person name="Lane G.A."/>
            <person name="Tanaka A."/>
            <person name="Johnson R.D."/>
        </authorList>
    </citation>
    <scope>FUNCTION</scope>
</reference>
<reference key="8">
    <citation type="journal article" date="2007" name="Appl. Environ. Microbiol.">
        <title>Comparison of ergot alkaloid biosynthesis gene clusters in Claviceps species indicates loss of late pathway steps in evolution of C. fusiformis.</title>
        <authorList>
            <person name="Lorenz N."/>
            <person name="Wilson E.V."/>
            <person name="Machado C."/>
            <person name="Schardl C.L."/>
            <person name="Tudzynski P."/>
        </authorList>
    </citation>
    <scope>FUNCTION</scope>
</reference>
<reference key="9">
    <citation type="journal article" date="2008" name="Fungal Genet. Biol.">
        <title>Use of a nonhomologous end joining deficient strain (Deltaku70) of the ergot fungus Claviceps purpurea for identification of a nonribosomal peptide synthetase gene involved in ergotamine biosynthesis.</title>
        <authorList>
            <person name="Haarmann T."/>
            <person name="Lorenz N."/>
            <person name="Tudzynski P."/>
        </authorList>
    </citation>
    <scope>FUNCTION</scope>
</reference>
<reference key="10">
    <citation type="journal article" date="2009" name="J. Biol. Chem.">
        <title>Combinatorial assembly of simple and complex D-lysergic acid alkaloid peptide classes in the ergot fungus Claviceps purpurea.</title>
        <authorList>
            <person name="Ortel I."/>
            <person name="Keller U."/>
        </authorList>
    </citation>
    <scope>FUNCTION</scope>
</reference>
<reference key="11">
    <citation type="journal article" date="2010" name="Appl. Environ. Microbiol.">
        <title>Alkaloid cluster gene ccsA of the ergot fungus Claviceps purpurea encodes chanoclavine I synthase, a flavin adenine dinucleotide-containing oxidoreductase mediating the transformation of N-methyl-dimethylallyltryptophan to chanoclavine I.</title>
        <authorList>
            <person name="Lorenz N."/>
            <person name="Olsovska J."/>
            <person name="Sulc M."/>
            <person name="Tudzynski P."/>
        </authorList>
    </citation>
    <scope>FUNCTION</scope>
</reference>
<reference key="12">
    <citation type="journal article" date="2010" name="J. Am. Chem. Soc.">
        <title>Controlling a structural branch point in ergot alkaloid biosynthesis.</title>
        <authorList>
            <person name="Cheng J.Z."/>
            <person name="Coyle C.M."/>
            <person name="Panaccione D.G."/>
            <person name="O'Connor S.E."/>
        </authorList>
    </citation>
    <scope>FUNCTION</scope>
    <source>
        <strain>ATCC 20102 / Farmitalia FI 32/17</strain>
    </source>
</reference>
<reference key="13">
    <citation type="journal article" date="2011" name="Curr. Genet.">
        <title>Ergot cluster-encoded catalase is required for synthesis of chanoclavine-I in Aspergillus fumigatus.</title>
        <authorList>
            <person name="Goetz K.E."/>
            <person name="Coyle C.M."/>
            <person name="Cheng J.Z."/>
            <person name="O'Connor S.E."/>
            <person name="Panaccione D.G."/>
        </authorList>
    </citation>
    <scope>FUNCTION</scope>
</reference>
<reference key="14">
    <citation type="journal article" date="2011" name="Org. Biomol. Chem.">
        <title>New insights into ergot alkaloid biosynthesis in Claviceps purpurea: an agroclavine synthase EasG catalyses, via a non-enzymatic adduct with reduced glutathione, the conversion of chanoclavine-I aldehyde to agroclavine.</title>
        <authorList>
            <person name="Matuschek M."/>
            <person name="Wallwey C."/>
            <person name="Xie X."/>
            <person name="Li S.M."/>
        </authorList>
    </citation>
    <scope>FUNCTION</scope>
    <scope>CATALYTIC ACTIVITY</scope>
    <scope>PATHWAY</scope>
    <scope>SUBUNIT</scope>
    <source>
        <strain>ATCC 20102 / Farmitalia FI 32/17</strain>
    </source>
</reference>
<reference key="15">
    <citation type="journal article" date="2014" name="Chem. Biol.">
        <title>Cyclolization of D-lysergic acid alkaloid peptides.</title>
        <authorList>
            <person name="Havemann J."/>
            <person name="Vogel D."/>
            <person name="Loll B."/>
            <person name="Keller U."/>
        </authorList>
    </citation>
    <scope>FUNCTION</scope>
</reference>
<gene>
    <name evidence="14" type="primary">easG</name>
    <name evidence="13" type="synonym">orfA</name>
</gene>
<proteinExistence type="evidence at protein level"/>
<evidence type="ECO:0000250" key="1">
    <source>
        <dbReference type="UniProtKB" id="Q50EL0"/>
    </source>
</evidence>
<evidence type="ECO:0000269" key="2">
    <source>
    </source>
</evidence>
<evidence type="ECO:0000269" key="3">
    <source>
    </source>
</evidence>
<evidence type="ECO:0000269" key="4">
    <source>
    </source>
</evidence>
<evidence type="ECO:0000269" key="5">
    <source>
    </source>
</evidence>
<evidence type="ECO:0000269" key="6">
    <source>
    </source>
</evidence>
<evidence type="ECO:0000269" key="7">
    <source>
    </source>
</evidence>
<evidence type="ECO:0000269" key="8">
    <source>
    </source>
</evidence>
<evidence type="ECO:0000269" key="9">
    <source>
    </source>
</evidence>
<evidence type="ECO:0000269" key="10">
    <source>
    </source>
</evidence>
<evidence type="ECO:0000269" key="11">
    <source>
    </source>
</evidence>
<evidence type="ECO:0000269" key="12">
    <source>
    </source>
</evidence>
<evidence type="ECO:0000303" key="13">
    <source>
    </source>
</evidence>
<evidence type="ECO:0000303" key="14">
    <source>
    </source>
</evidence>
<evidence type="ECO:0000305" key="15"/>
<evidence type="ECO:0000305" key="16">
    <source>
    </source>
</evidence>
<evidence type="ECO:0000305" key="17">
    <source>
    </source>
</evidence>
<organism>
    <name type="scientific">Claviceps purpurea</name>
    <name type="common">Ergot fungus</name>
    <name type="synonym">Sphacelia segetum</name>
    <dbReference type="NCBI Taxonomy" id="5111"/>
    <lineage>
        <taxon>Eukaryota</taxon>
        <taxon>Fungi</taxon>
        <taxon>Dikarya</taxon>
        <taxon>Ascomycota</taxon>
        <taxon>Pezizomycotina</taxon>
        <taxon>Sordariomycetes</taxon>
        <taxon>Hypocreomycetidae</taxon>
        <taxon>Hypocreales</taxon>
        <taxon>Clavicipitaceae</taxon>
        <taxon>Claviceps</taxon>
    </lineage>
</organism>
<comment type="function">
    <text evidence="1 2 3 4 5 6 7 8 9 10 11 12 16 17">Agroclavine dehydrogenase; part of the gene cluster that mediates the biosynthesis of fungal ergot alkaloid (PubMed:14700635, PubMed:14732265, PubMed:15904941, PubMed:17308187, PubMed:17720822). DmaW catalyzes the first step of ergot alkaloid biosynthesis by condensing dimethylallyl diphosphate (DMAP) and tryptophan to form 4-dimethylallyl-L-tryptophan (PubMed:14732265). The second step is catalyzed by the methyltransferase easF that methylates 4-dimethylallyl-L-tryptophan in the presence of S-adenosyl-L-methionine, resulting in the formation of 4-dimethylallyl-L-abrine (By similarity). The catalase easC and the FAD-dependent oxidoreductase easE then transform 4-dimethylallyl-L-abrine to chanoclavine-I which is further oxidized by easD in the presence of NAD(+), resulting in the formation of chanoclavine-I aldehyde (PubMed:20118373, PubMed:21409592). Agroclavine dehydrogenase easG then mediates the conversion of chanoclavine-I aldehyde to agroclavine via a non-enzymatic adduct reaction: the substrate is an iminium intermediate that is formed spontaneously from chanoclavine-I aldehyde in the presence of glutathione (PubMed:20735127, PubMed:21494745). The presence of easA is not required to complete this reaction (PubMed:21494745). Further conversion of agroclavine to paspalic acid is a two-step process involving oxidation of agroclavine to elymoclavine and of elymoclavine to paspalic acid, the second step being performed by the elymoclavine oxidase cloA (PubMed:16538694, PubMed:17720822). Paspalic acid is then further converted to D-lysergic acid (PubMed:15904941). Ergopeptines are assembled from D-lysergic acid and three different amino acids by the D-lysergyl-peptide-synthetases composed each of a monomudular and a trimodular nonribosomal peptide synthetase subunit (PubMed:14700635, PubMed:15904941). LpsB and lpsC encode the monomodular subunits responsible for D-lysergic acid activation and incorporation into the ergopeptine backbone (PubMed:14700635). LpsA1 and A2 subunits encode the trimodular nonribosomal peptide synthetase assembling the tripeptide portion of ergopeptines (PubMed:14700635). LpsA1 is responsible for formation of the major ergopeptine, ergotamine, and lpsA2 for alpha-ergocryptine, the minor ergopeptine of the total alkaloid mixture elaborated by C.purpurea (PubMed:17560817, PubMed:19139103). D-lysergyl-tripeptides are assembled by the nonribosomal peptide synthetases and released as N-(D-lysergyl-aminoacyl)-lactams (PubMed:24361048). Cyclolization of the D-lysergyl-tripeptides is performed by the Fe(2+)/2-ketoglutarate-dependent dioxygenase easH which introduces a hydroxyl group into N-(D-lysergyl-aminoacyl)-lactam at alpha-C of the aminoacyl residue followed by spontaneous condensation with the terminal lactam carbonyl group (PubMed:24361048).</text>
</comment>
<comment type="catalytic activity">
    <reaction evidence="11">
        <text>agroclavine + NADP(+) = didehydroagroclavine + NADPH + H(+)</text>
        <dbReference type="Rhea" id="RHEA:34059"/>
        <dbReference type="ChEBI" id="CHEBI:15378"/>
        <dbReference type="ChEBI" id="CHEBI:57783"/>
        <dbReference type="ChEBI" id="CHEBI:58349"/>
        <dbReference type="ChEBI" id="CHEBI:65036"/>
        <dbReference type="ChEBI" id="CHEBI:65042"/>
        <dbReference type="EC" id="1.5.1.46"/>
    </reaction>
</comment>
<comment type="pathway">
    <text evidence="11">Alkaloid biosynthesis; ergot alkaloid biosynthesis.</text>
</comment>
<comment type="subunit">
    <text evidence="11">Monomer.</text>
</comment>
<comment type="similarity">
    <text evidence="15">Belongs to the fgaFS/easG family.</text>
</comment>
<keyword id="KW-0017">Alkaloid metabolism</keyword>
<keyword id="KW-0521">NADP</keyword>
<keyword id="KW-0560">Oxidoreductase</keyword>
<dbReference type="EC" id="1.5.1.46" evidence="11"/>
<dbReference type="EMBL" id="AY836771">
    <property type="protein sequence ID" value="AAW57089.1"/>
    <property type="molecule type" value="Genomic_DNA"/>
</dbReference>
<dbReference type="SMR" id="P0CT21"/>
<dbReference type="KEGG" id="ag:AAW57089"/>
<dbReference type="VEuPathDB" id="FungiDB:CPUR_04077"/>
<dbReference type="BRENDA" id="1.5.1.46">
    <property type="organism ID" value="1445"/>
</dbReference>
<dbReference type="UniPathway" id="UPA00327"/>
<dbReference type="GO" id="GO:0016646">
    <property type="term" value="F:oxidoreductase activity, acting on the CH-NH group of donors, NAD or NADP as acceptor"/>
    <property type="evidence" value="ECO:0000314"/>
    <property type="project" value="UniProtKB"/>
</dbReference>
<dbReference type="GO" id="GO:0035837">
    <property type="term" value="P:ergot alkaloid biosynthetic process"/>
    <property type="evidence" value="ECO:0000314"/>
    <property type="project" value="UniProtKB"/>
</dbReference>
<dbReference type="Gene3D" id="3.40.50.720">
    <property type="entry name" value="NAD(P)-binding Rossmann-like Domain"/>
    <property type="match status" value="1"/>
</dbReference>
<dbReference type="Gene3D" id="3.90.25.10">
    <property type="entry name" value="UDP-galactose 4-epimerase, domain 1"/>
    <property type="match status" value="1"/>
</dbReference>
<dbReference type="InterPro" id="IPR051604">
    <property type="entry name" value="Ergot_Alk_Oxidoreductase"/>
</dbReference>
<dbReference type="InterPro" id="IPR019901">
    <property type="entry name" value="Ergot_alkaloid_biosynthesis"/>
</dbReference>
<dbReference type="InterPro" id="IPR036291">
    <property type="entry name" value="NAD(P)-bd_dom_sf"/>
</dbReference>
<dbReference type="InterPro" id="IPR008030">
    <property type="entry name" value="NmrA-like"/>
</dbReference>
<dbReference type="NCBIfam" id="TIGR03649">
    <property type="entry name" value="ergot_EASG"/>
    <property type="match status" value="1"/>
</dbReference>
<dbReference type="PANTHER" id="PTHR43162">
    <property type="match status" value="1"/>
</dbReference>
<dbReference type="PANTHER" id="PTHR43162:SF1">
    <property type="entry name" value="PRESTALK A DIFFERENTIATION PROTEIN A"/>
    <property type="match status" value="1"/>
</dbReference>
<dbReference type="Pfam" id="PF05368">
    <property type="entry name" value="NmrA"/>
    <property type="match status" value="1"/>
</dbReference>
<dbReference type="SUPFAM" id="SSF51735">
    <property type="entry name" value="NAD(P)-binding Rossmann-fold domains"/>
    <property type="match status" value="1"/>
</dbReference>